<organism>
    <name type="scientific">Shigella flexneri</name>
    <dbReference type="NCBI Taxonomy" id="623"/>
    <lineage>
        <taxon>Bacteria</taxon>
        <taxon>Pseudomonadati</taxon>
        <taxon>Pseudomonadota</taxon>
        <taxon>Gammaproteobacteria</taxon>
        <taxon>Enterobacterales</taxon>
        <taxon>Enterobacteriaceae</taxon>
        <taxon>Shigella</taxon>
    </lineage>
</organism>
<dbReference type="EMBL" id="AE005674">
    <property type="protein sequence ID" value="AAN43884.1"/>
    <property type="molecule type" value="Genomic_DNA"/>
</dbReference>
<dbReference type="EMBL" id="AE014073">
    <property type="protein sequence ID" value="AAP17702.1"/>
    <property type="molecule type" value="Genomic_DNA"/>
</dbReference>
<dbReference type="RefSeq" id="NP_708177.1">
    <property type="nucleotide sequence ID" value="NC_004337.2"/>
</dbReference>
<dbReference type="RefSeq" id="WP_000106622.1">
    <property type="nucleotide sequence ID" value="NZ_WPGW01000016.1"/>
</dbReference>
<dbReference type="STRING" id="198214.SF2371"/>
<dbReference type="PaxDb" id="198214-SF2371"/>
<dbReference type="GeneID" id="1025538"/>
<dbReference type="KEGG" id="sfl:SF2371"/>
<dbReference type="KEGG" id="sfx:S2506"/>
<dbReference type="PATRIC" id="fig|198214.7.peg.2837"/>
<dbReference type="HOGENOM" id="CLU_128746_0_0_6"/>
<dbReference type="Proteomes" id="UP000001006">
    <property type="component" value="Chromosome"/>
</dbReference>
<dbReference type="Proteomes" id="UP000002673">
    <property type="component" value="Chromosome"/>
</dbReference>
<dbReference type="GO" id="GO:0005886">
    <property type="term" value="C:plasma membrane"/>
    <property type="evidence" value="ECO:0007669"/>
    <property type="project" value="UniProtKB-SubCell"/>
</dbReference>
<dbReference type="HAMAP" id="MF_01101">
    <property type="entry name" value="UPF0208"/>
    <property type="match status" value="1"/>
</dbReference>
<dbReference type="InterPro" id="IPR007334">
    <property type="entry name" value="UPF0208"/>
</dbReference>
<dbReference type="NCBIfam" id="NF002493">
    <property type="entry name" value="PRK01816.1"/>
    <property type="match status" value="1"/>
</dbReference>
<dbReference type="Pfam" id="PF04217">
    <property type="entry name" value="DUF412"/>
    <property type="match status" value="1"/>
</dbReference>
<proteinExistence type="inferred from homology"/>
<evidence type="ECO:0000250" key="1"/>
<evidence type="ECO:0000255" key="2"/>
<evidence type="ECO:0000305" key="3"/>
<reference key="1">
    <citation type="journal article" date="2002" name="Nucleic Acids Res.">
        <title>Genome sequence of Shigella flexneri 2a: insights into pathogenicity through comparison with genomes of Escherichia coli K12 and O157.</title>
        <authorList>
            <person name="Jin Q."/>
            <person name="Yuan Z."/>
            <person name="Xu J."/>
            <person name="Wang Y."/>
            <person name="Shen Y."/>
            <person name="Lu W."/>
            <person name="Wang J."/>
            <person name="Liu H."/>
            <person name="Yang J."/>
            <person name="Yang F."/>
            <person name="Zhang X."/>
            <person name="Zhang J."/>
            <person name="Yang G."/>
            <person name="Wu H."/>
            <person name="Qu D."/>
            <person name="Dong J."/>
            <person name="Sun L."/>
            <person name="Xue Y."/>
            <person name="Zhao A."/>
            <person name="Gao Y."/>
            <person name="Zhu J."/>
            <person name="Kan B."/>
            <person name="Ding K."/>
            <person name="Chen S."/>
            <person name="Cheng H."/>
            <person name="Yao Z."/>
            <person name="He B."/>
            <person name="Chen R."/>
            <person name="Ma D."/>
            <person name="Qiang B."/>
            <person name="Wen Y."/>
            <person name="Hou Y."/>
            <person name="Yu J."/>
        </authorList>
    </citation>
    <scope>NUCLEOTIDE SEQUENCE [LARGE SCALE GENOMIC DNA]</scope>
    <source>
        <strain>301 / Serotype 2a</strain>
    </source>
</reference>
<reference key="2">
    <citation type="journal article" date="2003" name="Infect. Immun.">
        <title>Complete genome sequence and comparative genomics of Shigella flexneri serotype 2a strain 2457T.</title>
        <authorList>
            <person name="Wei J."/>
            <person name="Goldberg M.B."/>
            <person name="Burland V."/>
            <person name="Venkatesan M.M."/>
            <person name="Deng W."/>
            <person name="Fournier G."/>
            <person name="Mayhew G.F."/>
            <person name="Plunkett G. III"/>
            <person name="Rose D.J."/>
            <person name="Darling A."/>
            <person name="Mau B."/>
            <person name="Perna N.T."/>
            <person name="Payne S.M."/>
            <person name="Runyen-Janecky L.J."/>
            <person name="Zhou S."/>
            <person name="Schwartz D.C."/>
            <person name="Blattner F.R."/>
        </authorList>
    </citation>
    <scope>NUCLEOTIDE SEQUENCE [LARGE SCALE GENOMIC DNA]</scope>
    <source>
        <strain>ATCC 700930 / 2457T / Serotype 2a</strain>
    </source>
</reference>
<accession>Q83KB1</accession>
<name>YFBV_SHIFL</name>
<keyword id="KW-0997">Cell inner membrane</keyword>
<keyword id="KW-1003">Cell membrane</keyword>
<keyword id="KW-0472">Membrane</keyword>
<keyword id="KW-1185">Reference proteome</keyword>
<keyword id="KW-0812">Transmembrane</keyword>
<keyword id="KW-1133">Transmembrane helix</keyword>
<sequence>MSTPDNRSVNFFSLFRRGQHYSKTWPLEKRLAPVFVENRVIKMTRYAIRFMPPIAVFTLCWQIALGGLLGPAVATALFALSLPMQGLWWLGKRSVTPLPPAILNWFYEVRGKLQESGQVLAPVEGKPDYQALADTLKRAFKQLDKTFLDDL</sequence>
<feature type="chain" id="PRO_0000080823" description="UPF0208 membrane protein YfbV">
    <location>
        <begin position="1"/>
        <end position="151"/>
    </location>
</feature>
<feature type="topological domain" description="Cytoplasmic" evidence="2">
    <location>
        <begin position="1"/>
        <end position="45"/>
    </location>
</feature>
<feature type="transmembrane region" description="Helical" evidence="2">
    <location>
        <begin position="46"/>
        <end position="65"/>
    </location>
</feature>
<feature type="topological domain" description="Periplasmic" evidence="2">
    <location>
        <begin position="66"/>
        <end position="68"/>
    </location>
</feature>
<feature type="transmembrane region" description="Helical" evidence="2">
    <location>
        <begin position="69"/>
        <end position="91"/>
    </location>
</feature>
<feature type="topological domain" description="Cytoplasmic" evidence="2">
    <location>
        <begin position="92"/>
        <end position="151"/>
    </location>
</feature>
<protein>
    <recommendedName>
        <fullName>UPF0208 membrane protein YfbV</fullName>
    </recommendedName>
</protein>
<comment type="subcellular location">
    <subcellularLocation>
        <location evidence="1">Cell inner membrane</location>
        <topology evidence="1">Multi-pass membrane protein</topology>
    </subcellularLocation>
</comment>
<comment type="similarity">
    <text evidence="3">Belongs to the UPF0208 family.</text>
</comment>
<gene>
    <name type="primary">yfbV</name>
    <name type="ordered locus">SF2371</name>
    <name type="ordered locus">S2506</name>
</gene>